<proteinExistence type="evidence at transcript level"/>
<comment type="catalytic activity">
    <reaction>
        <text>(S)-4-amino-5-oxopentanoate = 5-aminolevulinate</text>
        <dbReference type="Rhea" id="RHEA:14265"/>
        <dbReference type="ChEBI" id="CHEBI:57501"/>
        <dbReference type="ChEBI" id="CHEBI:356416"/>
        <dbReference type="EC" id="5.4.3.8"/>
    </reaction>
</comment>
<comment type="cofactor">
    <cofactor>
        <name>pyridoxal 5'-phosphate</name>
        <dbReference type="ChEBI" id="CHEBI:597326"/>
    </cofactor>
</comment>
<comment type="pathway">
    <text>Porphyrin-containing compound metabolism; protoporphyrin-IX biosynthesis; 5-aminolevulinate from L-glutamyl-tRNA(Glu): step 2/2.</text>
</comment>
<comment type="pathway">
    <text>Porphyrin-containing compound metabolism; chlorophyll biosynthesis.</text>
</comment>
<comment type="subunit">
    <text evidence="1">Homodimer.</text>
</comment>
<comment type="subcellular location">
    <subcellularLocation>
        <location>Plastid</location>
        <location>Chloroplast</location>
    </subcellularLocation>
</comment>
<comment type="similarity">
    <text evidence="3">Belongs to the class-III pyridoxal-phosphate-dependent aminotransferase family. HemL subfamily.</text>
</comment>
<name>GSA_SOLLC</name>
<evidence type="ECO:0000250" key="1"/>
<evidence type="ECO:0000256" key="2">
    <source>
        <dbReference type="SAM" id="MobiDB-lite"/>
    </source>
</evidence>
<evidence type="ECO:0000305" key="3"/>
<accession>Q40147</accession>
<reference key="1">
    <citation type="online journal article" date="1995" name="Plant Gene Register">
        <title>A cDNA clone for glutamate 1-semialdehyde 2,1-aminomutase from tomato (Lycopersicon esculentum Mill.).</title>
        <authorList>
            <person name="Polking G.F."/>
            <person name="Hannapel D.J."/>
            <person name="Gladon R.J."/>
        </authorList>
        <locator>PGR95-035</locator>
    </citation>
    <scope>NUCLEOTIDE SEQUENCE [MRNA]</scope>
    <source>
        <strain>cv. VFNT Cherry</strain>
        <tissue>Fruit</tissue>
    </source>
</reference>
<feature type="transit peptide" description="Chloroplast">
    <location>
        <begin position="1"/>
        <end status="unknown"/>
    </location>
</feature>
<feature type="chain" id="PRO_0000001259" description="Glutamate-1-semialdehyde 2,1-aminomutase, chloroplastic">
    <location>
        <begin status="unknown"/>
        <end position="481"/>
    </location>
</feature>
<feature type="region of interest" description="Disordered" evidence="2">
    <location>
        <begin position="18"/>
        <end position="40"/>
    </location>
</feature>
<feature type="modified residue" description="N6-(pyridoxal phosphate)lysine" evidence="1">
    <location>
        <position position="321"/>
    </location>
</feature>
<keyword id="KW-0149">Chlorophyll biosynthesis</keyword>
<keyword id="KW-0150">Chloroplast</keyword>
<keyword id="KW-0413">Isomerase</keyword>
<keyword id="KW-0934">Plastid</keyword>
<keyword id="KW-0627">Porphyrin biosynthesis</keyword>
<keyword id="KW-0663">Pyridoxal phosphate</keyword>
<keyword id="KW-1185">Reference proteome</keyword>
<keyword id="KW-0809">Transit peptide</keyword>
<organism>
    <name type="scientific">Solanum lycopersicum</name>
    <name type="common">Tomato</name>
    <name type="synonym">Lycopersicon esculentum</name>
    <dbReference type="NCBI Taxonomy" id="4081"/>
    <lineage>
        <taxon>Eukaryota</taxon>
        <taxon>Viridiplantae</taxon>
        <taxon>Streptophyta</taxon>
        <taxon>Embryophyta</taxon>
        <taxon>Tracheophyta</taxon>
        <taxon>Spermatophyta</taxon>
        <taxon>Magnoliopsida</taxon>
        <taxon>eudicotyledons</taxon>
        <taxon>Gunneridae</taxon>
        <taxon>Pentapetalae</taxon>
        <taxon>asterids</taxon>
        <taxon>lamiids</taxon>
        <taxon>Solanales</taxon>
        <taxon>Solanaceae</taxon>
        <taxon>Solanoideae</taxon>
        <taxon>Solaneae</taxon>
        <taxon>Solanum</taxon>
        <taxon>Solanum subgen. Lycopersicon</taxon>
    </lineage>
</organism>
<protein>
    <recommendedName>
        <fullName>Glutamate-1-semialdehyde 2,1-aminomutase, chloroplastic</fullName>
        <shortName>GSA</shortName>
        <ecNumber>5.4.3.8</ecNumber>
    </recommendedName>
    <alternativeName>
        <fullName>Glutamate-1-semialdehyde aminotransferase</fullName>
        <shortName>GSA-AT</shortName>
    </alternativeName>
</protein>
<sequence length="481" mass="51413">MAAVNGVGLSWPSKLTKNQTPKWGFSPSHRRCNPSSSSSATIRMTASVDEKKKTFTLEKSEEAFSKAKELMPGGVNSPVRAFKSVGGQPIIIDSVKGSRMRDIDGNEYIDYVGSWGPAIIGHADDEVLAALAETMKKGTSFGAPCLLENTLAEMVISAVPSIEMVRFVNSGTEACMGVLRLARAFTCRPKIIKFEGCYHGHADPFLVKAGSGVATLGLPDSPGVPKAATIDTLTAPYNDISAVESLFEEHKGEIAAVILEPVVGNAGFIPPKLEFLAAIRKITKENDALLIFDEVMTGFRLAYGGAQEYFGITPDLTTLGKIIGGGLPVGAYGGRRDIMEMVAPAGPMYQAGTLSGNPLAMTAGIHTLKRLQGQGTYEHLDKITAELTQGILDAGKKTGHAMCGGSIRGMFGFFFADGPIYNFSDAKKSDTEKFGRFYRGMLEEGVYFAPSQFEAGFTSLAHTPEDIQRTVAAAEKVLKQI</sequence>
<dbReference type="EC" id="5.4.3.8"/>
<dbReference type="EMBL" id="L39279">
    <property type="protein sequence ID" value="AAA81881.1"/>
    <property type="molecule type" value="mRNA"/>
</dbReference>
<dbReference type="PIR" id="T07034">
    <property type="entry name" value="T07034"/>
</dbReference>
<dbReference type="SMR" id="Q40147"/>
<dbReference type="FunCoup" id="Q40147">
    <property type="interactions" value="1307"/>
</dbReference>
<dbReference type="STRING" id="4081.Q40147"/>
<dbReference type="PaxDb" id="4081-Solyc04g009200.2.1"/>
<dbReference type="eggNOG" id="KOG1401">
    <property type="taxonomic scope" value="Eukaryota"/>
</dbReference>
<dbReference type="InParanoid" id="Q40147"/>
<dbReference type="UniPathway" id="UPA00251">
    <property type="reaction ID" value="UER00317"/>
</dbReference>
<dbReference type="UniPathway" id="UPA00668"/>
<dbReference type="Proteomes" id="UP000004994">
    <property type="component" value="Unplaced"/>
</dbReference>
<dbReference type="ExpressionAtlas" id="Q40147">
    <property type="expression patterns" value="baseline and differential"/>
</dbReference>
<dbReference type="GO" id="GO:0009507">
    <property type="term" value="C:chloroplast"/>
    <property type="evidence" value="ECO:0000318"/>
    <property type="project" value="GO_Central"/>
</dbReference>
<dbReference type="GO" id="GO:0042286">
    <property type="term" value="F:glutamate-1-semialdehyde 2,1-aminomutase activity"/>
    <property type="evidence" value="ECO:0007669"/>
    <property type="project" value="UniProtKB-EC"/>
</dbReference>
<dbReference type="GO" id="GO:0030170">
    <property type="term" value="F:pyridoxal phosphate binding"/>
    <property type="evidence" value="ECO:0007669"/>
    <property type="project" value="InterPro"/>
</dbReference>
<dbReference type="GO" id="GO:0008483">
    <property type="term" value="F:transaminase activity"/>
    <property type="evidence" value="ECO:0007669"/>
    <property type="project" value="InterPro"/>
</dbReference>
<dbReference type="GO" id="GO:0015995">
    <property type="term" value="P:chlorophyll biosynthetic process"/>
    <property type="evidence" value="ECO:0007669"/>
    <property type="project" value="UniProtKB-UniPathway"/>
</dbReference>
<dbReference type="GO" id="GO:0006782">
    <property type="term" value="P:protoporphyrinogen IX biosynthetic process"/>
    <property type="evidence" value="ECO:0007669"/>
    <property type="project" value="UniProtKB-UniPathway"/>
</dbReference>
<dbReference type="CDD" id="cd00610">
    <property type="entry name" value="OAT_like"/>
    <property type="match status" value="1"/>
</dbReference>
<dbReference type="FunFam" id="3.40.640.10:FF:000021">
    <property type="entry name" value="Glutamate-1-semialdehyde 2,1-aminomutase"/>
    <property type="match status" value="1"/>
</dbReference>
<dbReference type="FunFam" id="3.90.1150.10:FF:000012">
    <property type="entry name" value="Glutamate-1-semialdehyde 2,1-aminomutase"/>
    <property type="match status" value="1"/>
</dbReference>
<dbReference type="Gene3D" id="3.90.1150.10">
    <property type="entry name" value="Aspartate Aminotransferase, domain 1"/>
    <property type="match status" value="1"/>
</dbReference>
<dbReference type="Gene3D" id="3.40.640.10">
    <property type="entry name" value="Type I PLP-dependent aspartate aminotransferase-like (Major domain)"/>
    <property type="match status" value="1"/>
</dbReference>
<dbReference type="HAMAP" id="MF_00375">
    <property type="entry name" value="HemL_aminotrans_3"/>
    <property type="match status" value="1"/>
</dbReference>
<dbReference type="InterPro" id="IPR004639">
    <property type="entry name" value="4pyrrol_synth_GluAld_NH2Trfase"/>
</dbReference>
<dbReference type="InterPro" id="IPR005814">
    <property type="entry name" value="Aminotrans_3"/>
</dbReference>
<dbReference type="InterPro" id="IPR049704">
    <property type="entry name" value="Aminotrans_3_PPA_site"/>
</dbReference>
<dbReference type="InterPro" id="IPR015424">
    <property type="entry name" value="PyrdxlP-dep_Trfase"/>
</dbReference>
<dbReference type="InterPro" id="IPR015421">
    <property type="entry name" value="PyrdxlP-dep_Trfase_major"/>
</dbReference>
<dbReference type="InterPro" id="IPR015422">
    <property type="entry name" value="PyrdxlP-dep_Trfase_small"/>
</dbReference>
<dbReference type="NCBIfam" id="TIGR00713">
    <property type="entry name" value="hemL"/>
    <property type="match status" value="1"/>
</dbReference>
<dbReference type="NCBIfam" id="NF000818">
    <property type="entry name" value="PRK00062.1"/>
    <property type="match status" value="1"/>
</dbReference>
<dbReference type="PANTHER" id="PTHR43713">
    <property type="entry name" value="GLUTAMATE-1-SEMIALDEHYDE 2,1-AMINOMUTASE"/>
    <property type="match status" value="1"/>
</dbReference>
<dbReference type="PANTHER" id="PTHR43713:SF3">
    <property type="entry name" value="GLUTAMATE-1-SEMIALDEHYDE 2,1-AMINOMUTASE 1, CHLOROPLASTIC-RELATED"/>
    <property type="match status" value="1"/>
</dbReference>
<dbReference type="Pfam" id="PF00202">
    <property type="entry name" value="Aminotran_3"/>
    <property type="match status" value="1"/>
</dbReference>
<dbReference type="SUPFAM" id="SSF53383">
    <property type="entry name" value="PLP-dependent transferases"/>
    <property type="match status" value="1"/>
</dbReference>
<dbReference type="PROSITE" id="PS00600">
    <property type="entry name" value="AA_TRANSFER_CLASS_3"/>
    <property type="match status" value="1"/>
</dbReference>